<protein>
    <recommendedName>
        <fullName evidence="1">Leucine--tRNA ligase</fullName>
        <ecNumber evidence="1">6.1.1.4</ecNumber>
    </recommendedName>
    <alternativeName>
        <fullName evidence="1">Leucyl-tRNA synthetase</fullName>
        <shortName evidence="1">LeuRS</shortName>
    </alternativeName>
</protein>
<gene>
    <name evidence="1" type="primary">leuS</name>
    <name type="ordered locus">ERGA_CDS_03010</name>
</gene>
<accession>Q5FHG5</accession>
<feature type="chain" id="PRO_0000334754" description="Leucine--tRNA ligase">
    <location>
        <begin position="1"/>
        <end position="830"/>
    </location>
</feature>
<feature type="short sequence motif" description="'HIGH' region">
    <location>
        <begin position="34"/>
        <end position="44"/>
    </location>
</feature>
<feature type="short sequence motif" description="'KMSKS' region">
    <location>
        <begin position="592"/>
        <end position="596"/>
    </location>
</feature>
<feature type="binding site" evidence="1">
    <location>
        <position position="595"/>
    </location>
    <ligand>
        <name>ATP</name>
        <dbReference type="ChEBI" id="CHEBI:30616"/>
    </ligand>
</feature>
<reference key="1">
    <citation type="journal article" date="2006" name="J. Bacteriol.">
        <title>Comparative genomic analysis of three strains of Ehrlichia ruminantium reveals an active process of genome size plasticity.</title>
        <authorList>
            <person name="Frutos R."/>
            <person name="Viari A."/>
            <person name="Ferraz C."/>
            <person name="Morgat A."/>
            <person name="Eychenie S."/>
            <person name="Kandassamy Y."/>
            <person name="Chantal I."/>
            <person name="Bensaid A."/>
            <person name="Coissac E."/>
            <person name="Vachiery N."/>
            <person name="Demaille J."/>
            <person name="Martinez D."/>
        </authorList>
    </citation>
    <scope>NUCLEOTIDE SEQUENCE [LARGE SCALE GENOMIC DNA]</scope>
    <source>
        <strain>Gardel</strain>
    </source>
</reference>
<keyword id="KW-0030">Aminoacyl-tRNA synthetase</keyword>
<keyword id="KW-0067">ATP-binding</keyword>
<keyword id="KW-0963">Cytoplasm</keyword>
<keyword id="KW-0436">Ligase</keyword>
<keyword id="KW-0547">Nucleotide-binding</keyword>
<keyword id="KW-0648">Protein biosynthesis</keyword>
<organism>
    <name type="scientific">Ehrlichia ruminantium (strain Gardel)</name>
    <dbReference type="NCBI Taxonomy" id="302409"/>
    <lineage>
        <taxon>Bacteria</taxon>
        <taxon>Pseudomonadati</taxon>
        <taxon>Pseudomonadota</taxon>
        <taxon>Alphaproteobacteria</taxon>
        <taxon>Rickettsiales</taxon>
        <taxon>Anaplasmataceae</taxon>
        <taxon>Ehrlichia</taxon>
    </lineage>
</organism>
<evidence type="ECO:0000255" key="1">
    <source>
        <dbReference type="HAMAP-Rule" id="MF_00049"/>
    </source>
</evidence>
<proteinExistence type="inferred from homology"/>
<dbReference type="EC" id="6.1.1.4" evidence="1"/>
<dbReference type="EMBL" id="CR925677">
    <property type="protein sequence ID" value="CAI27753.1"/>
    <property type="molecule type" value="Genomic_DNA"/>
</dbReference>
<dbReference type="RefSeq" id="WP_011255458.1">
    <property type="nucleotide sequence ID" value="NC_006831.1"/>
</dbReference>
<dbReference type="SMR" id="Q5FHG5"/>
<dbReference type="KEGG" id="erg:ERGA_CDS_03010"/>
<dbReference type="HOGENOM" id="CLU_004427_0_0_5"/>
<dbReference type="OrthoDB" id="9810365at2"/>
<dbReference type="Proteomes" id="UP000000533">
    <property type="component" value="Chromosome"/>
</dbReference>
<dbReference type="GO" id="GO:0005829">
    <property type="term" value="C:cytosol"/>
    <property type="evidence" value="ECO:0007669"/>
    <property type="project" value="TreeGrafter"/>
</dbReference>
<dbReference type="GO" id="GO:0002161">
    <property type="term" value="F:aminoacyl-tRNA deacylase activity"/>
    <property type="evidence" value="ECO:0007669"/>
    <property type="project" value="InterPro"/>
</dbReference>
<dbReference type="GO" id="GO:0005524">
    <property type="term" value="F:ATP binding"/>
    <property type="evidence" value="ECO:0007669"/>
    <property type="project" value="UniProtKB-UniRule"/>
</dbReference>
<dbReference type="GO" id="GO:0004823">
    <property type="term" value="F:leucine-tRNA ligase activity"/>
    <property type="evidence" value="ECO:0007669"/>
    <property type="project" value="UniProtKB-UniRule"/>
</dbReference>
<dbReference type="GO" id="GO:0006429">
    <property type="term" value="P:leucyl-tRNA aminoacylation"/>
    <property type="evidence" value="ECO:0007669"/>
    <property type="project" value="UniProtKB-UniRule"/>
</dbReference>
<dbReference type="CDD" id="cd07958">
    <property type="entry name" value="Anticodon_Ia_Leu_BEm"/>
    <property type="match status" value="1"/>
</dbReference>
<dbReference type="CDD" id="cd00812">
    <property type="entry name" value="LeuRS_core"/>
    <property type="match status" value="1"/>
</dbReference>
<dbReference type="FunFam" id="1.10.730.10:FF:000002">
    <property type="entry name" value="Leucine--tRNA ligase"/>
    <property type="match status" value="1"/>
</dbReference>
<dbReference type="Gene3D" id="3.40.50.620">
    <property type="entry name" value="HUPs"/>
    <property type="match status" value="2"/>
</dbReference>
<dbReference type="Gene3D" id="1.10.730.10">
    <property type="entry name" value="Isoleucyl-tRNA Synthetase, Domain 1"/>
    <property type="match status" value="1"/>
</dbReference>
<dbReference type="Gene3D" id="3.90.740.10">
    <property type="entry name" value="Valyl/Leucyl/Isoleucyl-tRNA synthetase, editing domain"/>
    <property type="match status" value="1"/>
</dbReference>
<dbReference type="HAMAP" id="MF_00049_B">
    <property type="entry name" value="Leu_tRNA_synth_B"/>
    <property type="match status" value="1"/>
</dbReference>
<dbReference type="InterPro" id="IPR001412">
    <property type="entry name" value="aa-tRNA-synth_I_CS"/>
</dbReference>
<dbReference type="InterPro" id="IPR002300">
    <property type="entry name" value="aa-tRNA-synth_Ia"/>
</dbReference>
<dbReference type="InterPro" id="IPR002302">
    <property type="entry name" value="Leu-tRNA-ligase"/>
</dbReference>
<dbReference type="InterPro" id="IPR025709">
    <property type="entry name" value="Leu_tRNA-synth_edit"/>
</dbReference>
<dbReference type="InterPro" id="IPR013155">
    <property type="entry name" value="M/V/L/I-tRNA-synth_anticd-bd"/>
</dbReference>
<dbReference type="InterPro" id="IPR015413">
    <property type="entry name" value="Methionyl/Leucyl_tRNA_Synth"/>
</dbReference>
<dbReference type="InterPro" id="IPR014729">
    <property type="entry name" value="Rossmann-like_a/b/a_fold"/>
</dbReference>
<dbReference type="InterPro" id="IPR009080">
    <property type="entry name" value="tRNAsynth_Ia_anticodon-bd"/>
</dbReference>
<dbReference type="InterPro" id="IPR009008">
    <property type="entry name" value="Val/Leu/Ile-tRNA-synth_edit"/>
</dbReference>
<dbReference type="NCBIfam" id="TIGR00396">
    <property type="entry name" value="leuS_bact"/>
    <property type="match status" value="1"/>
</dbReference>
<dbReference type="PANTHER" id="PTHR43740:SF2">
    <property type="entry name" value="LEUCINE--TRNA LIGASE, MITOCHONDRIAL"/>
    <property type="match status" value="1"/>
</dbReference>
<dbReference type="PANTHER" id="PTHR43740">
    <property type="entry name" value="LEUCYL-TRNA SYNTHETASE"/>
    <property type="match status" value="1"/>
</dbReference>
<dbReference type="Pfam" id="PF08264">
    <property type="entry name" value="Anticodon_1"/>
    <property type="match status" value="1"/>
</dbReference>
<dbReference type="Pfam" id="PF00133">
    <property type="entry name" value="tRNA-synt_1"/>
    <property type="match status" value="2"/>
</dbReference>
<dbReference type="Pfam" id="PF13603">
    <property type="entry name" value="tRNA-synt_1_2"/>
    <property type="match status" value="1"/>
</dbReference>
<dbReference type="Pfam" id="PF09334">
    <property type="entry name" value="tRNA-synt_1g"/>
    <property type="match status" value="1"/>
</dbReference>
<dbReference type="PRINTS" id="PR00985">
    <property type="entry name" value="TRNASYNTHLEU"/>
</dbReference>
<dbReference type="SUPFAM" id="SSF47323">
    <property type="entry name" value="Anticodon-binding domain of a subclass of class I aminoacyl-tRNA synthetases"/>
    <property type="match status" value="1"/>
</dbReference>
<dbReference type="SUPFAM" id="SSF52374">
    <property type="entry name" value="Nucleotidylyl transferase"/>
    <property type="match status" value="1"/>
</dbReference>
<dbReference type="SUPFAM" id="SSF50677">
    <property type="entry name" value="ValRS/IleRS/LeuRS editing domain"/>
    <property type="match status" value="1"/>
</dbReference>
<dbReference type="PROSITE" id="PS00178">
    <property type="entry name" value="AA_TRNA_LIGASE_I"/>
    <property type="match status" value="1"/>
</dbReference>
<sequence>MHYDFKEVERDVQEKWDFTVNVKDVQCYVLEMFPYPSGNIHMGHLRNYTIGDVIARYKRACGLHVFHPIGWDAFGLPAENAALSYNISPQVWTRKNIDNMRSQLKSIGLSYNWDKEFATCDAEYYKYEQEFFLDFLKYGLAYRKESLVNWDPVDQTVLANEQVIDGRGWRSGAIIEKRKLSQWFLKITDFAAELLDDLKSLNQWPEKVKLMQERWIGKSEGVIIDFQIVGINEVLQVFTTSPHTLFGASFIAVSFDHPILKYVNDVQLIQLIDSFDRKDLIDDSSINTVEKFGINSGLVAKHPLLDMDLPIYVANFVLMNYGTGAVFCCPAHDQRDFDFAKKYSLPIRQVIFPEQNVDLEREAYVGSGIMGCSGFLDGMTVDDAKKSMIEKLISLGICKKQVYYRLHDWGISRQRYWGCPIPIIYCKKCGIVPVDKKDLPITLPEDIDFTKSGNPLDNHPTWKYTKCPSCGADAKRETDTFDTFFESSWYFAAFCGIGKGIDKDVCNKLLPVDYYIGGIEHAVLHLLYSRFFCRALTRCGYFDVKEPFSSLITQGMVCHSTYLDKYGNYLFPEDGKKMIQEGKYVTVGRAEKMSKSKKNVVHLDDIIDKYGADSARLFILSDTPPERDIEWLDENIEGVSRYLNKLWKMIVDYDQIEQNFVFNDISNDAVEYRMNVHKILNDITNDLEFYRFNCAVAKFRELSNVISEMIRLSINHHVVSEAIYILIRVVEPFIPHIAEKLWQIVGGQGMLCNQLWPKVDSQLLIKKNVNIVVQVNGKFIKAVSVPNDIDDDTLKSIALEVAQRRIGNSSVKNIYIIPARVINIVITKSS</sequence>
<name>SYL_EHRRG</name>
<comment type="catalytic activity">
    <reaction evidence="1">
        <text>tRNA(Leu) + L-leucine + ATP = L-leucyl-tRNA(Leu) + AMP + diphosphate</text>
        <dbReference type="Rhea" id="RHEA:11688"/>
        <dbReference type="Rhea" id="RHEA-COMP:9613"/>
        <dbReference type="Rhea" id="RHEA-COMP:9622"/>
        <dbReference type="ChEBI" id="CHEBI:30616"/>
        <dbReference type="ChEBI" id="CHEBI:33019"/>
        <dbReference type="ChEBI" id="CHEBI:57427"/>
        <dbReference type="ChEBI" id="CHEBI:78442"/>
        <dbReference type="ChEBI" id="CHEBI:78494"/>
        <dbReference type="ChEBI" id="CHEBI:456215"/>
        <dbReference type="EC" id="6.1.1.4"/>
    </reaction>
</comment>
<comment type="subcellular location">
    <subcellularLocation>
        <location evidence="1">Cytoplasm</location>
    </subcellularLocation>
</comment>
<comment type="similarity">
    <text evidence="1">Belongs to the class-I aminoacyl-tRNA synthetase family.</text>
</comment>